<dbReference type="EMBL" id="CP000378">
    <property type="protein sequence ID" value="ABF77714.1"/>
    <property type="molecule type" value="Genomic_DNA"/>
</dbReference>
<dbReference type="SMR" id="Q1BRP1"/>
<dbReference type="HOGENOM" id="CLU_115353_1_0_4"/>
<dbReference type="GO" id="GO:0003676">
    <property type="term" value="F:nucleic acid binding"/>
    <property type="evidence" value="ECO:0007669"/>
    <property type="project" value="InterPro"/>
</dbReference>
<dbReference type="Gene3D" id="3.40.1350.10">
    <property type="match status" value="1"/>
</dbReference>
<dbReference type="HAMAP" id="MF_00048">
    <property type="entry name" value="UPF0102"/>
    <property type="match status" value="1"/>
</dbReference>
<dbReference type="InterPro" id="IPR011335">
    <property type="entry name" value="Restrct_endonuc-II-like"/>
</dbReference>
<dbReference type="InterPro" id="IPR011856">
    <property type="entry name" value="tRNA_endonuc-like_dom_sf"/>
</dbReference>
<dbReference type="InterPro" id="IPR003509">
    <property type="entry name" value="UPF0102_YraN-like"/>
</dbReference>
<dbReference type="NCBIfam" id="NF009150">
    <property type="entry name" value="PRK12497.1-3"/>
    <property type="match status" value="1"/>
</dbReference>
<dbReference type="NCBIfam" id="TIGR00252">
    <property type="entry name" value="YraN family protein"/>
    <property type="match status" value="1"/>
</dbReference>
<dbReference type="PANTHER" id="PTHR34039">
    <property type="entry name" value="UPF0102 PROTEIN YRAN"/>
    <property type="match status" value="1"/>
</dbReference>
<dbReference type="PANTHER" id="PTHR34039:SF1">
    <property type="entry name" value="UPF0102 PROTEIN YRAN"/>
    <property type="match status" value="1"/>
</dbReference>
<dbReference type="Pfam" id="PF02021">
    <property type="entry name" value="UPF0102"/>
    <property type="match status" value="1"/>
</dbReference>
<dbReference type="SUPFAM" id="SSF52980">
    <property type="entry name" value="Restriction endonuclease-like"/>
    <property type="match status" value="1"/>
</dbReference>
<protein>
    <recommendedName>
        <fullName evidence="1">UPF0102 protein Bcen_2816</fullName>
    </recommendedName>
</protein>
<accession>Q1BRP1</accession>
<comment type="similarity">
    <text evidence="1">Belongs to the UPF0102 family.</text>
</comment>
<gene>
    <name type="ordered locus">Bcen_2816</name>
</gene>
<feature type="chain" id="PRO_0000336137" description="UPF0102 protein Bcen_2816">
    <location>
        <begin position="1"/>
        <end position="142"/>
    </location>
</feature>
<feature type="region of interest" description="Disordered" evidence="2">
    <location>
        <begin position="1"/>
        <end position="27"/>
    </location>
</feature>
<feature type="compositionally biased region" description="Low complexity" evidence="2">
    <location>
        <begin position="1"/>
        <end position="19"/>
    </location>
</feature>
<name>Y2816_BURO1</name>
<sequence>MCHAAPARPEGARGRPPSGDNFSGAARSKPVGAAFEQRARQFLERHGLGFVAANVTMRGGELDLVMREPDGMLVFVEVRARRSTRHGGATASVGWRKRRRLVAAALQFWSRHGAGAACRFDVVAFEAGRLAWLRDAFRTDDA</sequence>
<proteinExistence type="inferred from homology"/>
<organism>
    <name type="scientific">Burkholderia orbicola (strain AU 1054)</name>
    <dbReference type="NCBI Taxonomy" id="331271"/>
    <lineage>
        <taxon>Bacteria</taxon>
        <taxon>Pseudomonadati</taxon>
        <taxon>Pseudomonadota</taxon>
        <taxon>Betaproteobacteria</taxon>
        <taxon>Burkholderiales</taxon>
        <taxon>Burkholderiaceae</taxon>
        <taxon>Burkholderia</taxon>
        <taxon>Burkholderia cepacia complex</taxon>
        <taxon>Burkholderia orbicola</taxon>
    </lineage>
</organism>
<reference key="1">
    <citation type="submission" date="2006-05" db="EMBL/GenBank/DDBJ databases">
        <title>Complete sequence of chromosome 1 of Burkholderia cenocepacia AU 1054.</title>
        <authorList>
            <consortium name="US DOE Joint Genome Institute"/>
            <person name="Copeland A."/>
            <person name="Lucas S."/>
            <person name="Lapidus A."/>
            <person name="Barry K."/>
            <person name="Detter J.C."/>
            <person name="Glavina del Rio T."/>
            <person name="Hammon N."/>
            <person name="Israni S."/>
            <person name="Dalin E."/>
            <person name="Tice H."/>
            <person name="Pitluck S."/>
            <person name="Chain P."/>
            <person name="Malfatti S."/>
            <person name="Shin M."/>
            <person name="Vergez L."/>
            <person name="Schmutz J."/>
            <person name="Larimer F."/>
            <person name="Land M."/>
            <person name="Hauser L."/>
            <person name="Kyrpides N."/>
            <person name="Lykidis A."/>
            <person name="LiPuma J.J."/>
            <person name="Konstantinidis K."/>
            <person name="Tiedje J.M."/>
            <person name="Richardson P."/>
        </authorList>
    </citation>
    <scope>NUCLEOTIDE SEQUENCE [LARGE SCALE GENOMIC DNA]</scope>
    <source>
        <strain>AU 1054</strain>
    </source>
</reference>
<evidence type="ECO:0000255" key="1">
    <source>
        <dbReference type="HAMAP-Rule" id="MF_00048"/>
    </source>
</evidence>
<evidence type="ECO:0000256" key="2">
    <source>
        <dbReference type="SAM" id="MobiDB-lite"/>
    </source>
</evidence>